<accession>Q2GDR2</accession>
<gene>
    <name evidence="1" type="primary">ligA</name>
    <name type="ordered locus">NSE_0500</name>
</gene>
<dbReference type="EC" id="6.5.1.2" evidence="1"/>
<dbReference type="EMBL" id="CP000237">
    <property type="protein sequence ID" value="ABD46192.1"/>
    <property type="molecule type" value="Genomic_DNA"/>
</dbReference>
<dbReference type="RefSeq" id="WP_011451890.1">
    <property type="nucleotide sequence ID" value="NC_007798.1"/>
</dbReference>
<dbReference type="SMR" id="Q2GDR2"/>
<dbReference type="STRING" id="222891.NSE_0500"/>
<dbReference type="KEGG" id="nse:NSE_0500"/>
<dbReference type="eggNOG" id="COG0272">
    <property type="taxonomic scope" value="Bacteria"/>
</dbReference>
<dbReference type="HOGENOM" id="CLU_007764_2_1_5"/>
<dbReference type="OrthoDB" id="9759736at2"/>
<dbReference type="Proteomes" id="UP000001942">
    <property type="component" value="Chromosome"/>
</dbReference>
<dbReference type="GO" id="GO:0005829">
    <property type="term" value="C:cytosol"/>
    <property type="evidence" value="ECO:0007669"/>
    <property type="project" value="TreeGrafter"/>
</dbReference>
<dbReference type="GO" id="GO:0003911">
    <property type="term" value="F:DNA ligase (NAD+) activity"/>
    <property type="evidence" value="ECO:0007669"/>
    <property type="project" value="UniProtKB-UniRule"/>
</dbReference>
<dbReference type="GO" id="GO:0046872">
    <property type="term" value="F:metal ion binding"/>
    <property type="evidence" value="ECO:0007669"/>
    <property type="project" value="UniProtKB-KW"/>
</dbReference>
<dbReference type="GO" id="GO:0006281">
    <property type="term" value="P:DNA repair"/>
    <property type="evidence" value="ECO:0007669"/>
    <property type="project" value="UniProtKB-KW"/>
</dbReference>
<dbReference type="GO" id="GO:0006260">
    <property type="term" value="P:DNA replication"/>
    <property type="evidence" value="ECO:0007669"/>
    <property type="project" value="UniProtKB-KW"/>
</dbReference>
<dbReference type="CDD" id="cd17748">
    <property type="entry name" value="BRCT_DNA_ligase_like"/>
    <property type="match status" value="1"/>
</dbReference>
<dbReference type="CDD" id="cd00114">
    <property type="entry name" value="LIGANc"/>
    <property type="match status" value="1"/>
</dbReference>
<dbReference type="FunFam" id="2.40.50.140:FF:000012">
    <property type="entry name" value="DNA ligase"/>
    <property type="match status" value="1"/>
</dbReference>
<dbReference type="Gene3D" id="6.20.10.30">
    <property type="match status" value="1"/>
</dbReference>
<dbReference type="Gene3D" id="1.10.150.20">
    <property type="entry name" value="5' to 3' exonuclease, C-terminal subdomain"/>
    <property type="match status" value="2"/>
</dbReference>
<dbReference type="Gene3D" id="3.40.50.10190">
    <property type="entry name" value="BRCT domain"/>
    <property type="match status" value="1"/>
</dbReference>
<dbReference type="Gene3D" id="3.30.470.30">
    <property type="entry name" value="DNA ligase/mRNA capping enzyme"/>
    <property type="match status" value="1"/>
</dbReference>
<dbReference type="Gene3D" id="1.10.287.610">
    <property type="entry name" value="Helix hairpin bin"/>
    <property type="match status" value="1"/>
</dbReference>
<dbReference type="Gene3D" id="2.40.50.140">
    <property type="entry name" value="Nucleic acid-binding proteins"/>
    <property type="match status" value="1"/>
</dbReference>
<dbReference type="HAMAP" id="MF_01588">
    <property type="entry name" value="DNA_ligase_A"/>
    <property type="match status" value="1"/>
</dbReference>
<dbReference type="InterPro" id="IPR001357">
    <property type="entry name" value="BRCT_dom"/>
</dbReference>
<dbReference type="InterPro" id="IPR036420">
    <property type="entry name" value="BRCT_dom_sf"/>
</dbReference>
<dbReference type="InterPro" id="IPR041663">
    <property type="entry name" value="DisA/LigA_HHH"/>
</dbReference>
<dbReference type="InterPro" id="IPR001679">
    <property type="entry name" value="DNA_ligase"/>
</dbReference>
<dbReference type="InterPro" id="IPR018239">
    <property type="entry name" value="DNA_ligase_AS"/>
</dbReference>
<dbReference type="InterPro" id="IPR033136">
    <property type="entry name" value="DNA_ligase_CS"/>
</dbReference>
<dbReference type="InterPro" id="IPR013839">
    <property type="entry name" value="DNAligase_adenylation"/>
</dbReference>
<dbReference type="InterPro" id="IPR013840">
    <property type="entry name" value="DNAligase_N"/>
</dbReference>
<dbReference type="InterPro" id="IPR012340">
    <property type="entry name" value="NA-bd_OB-fold"/>
</dbReference>
<dbReference type="InterPro" id="IPR004150">
    <property type="entry name" value="NAD_DNA_ligase_OB"/>
</dbReference>
<dbReference type="InterPro" id="IPR010994">
    <property type="entry name" value="RuvA_2-like"/>
</dbReference>
<dbReference type="InterPro" id="IPR004149">
    <property type="entry name" value="Znf_DNAligase_C4"/>
</dbReference>
<dbReference type="NCBIfam" id="TIGR00575">
    <property type="entry name" value="dnlj"/>
    <property type="match status" value="1"/>
</dbReference>
<dbReference type="NCBIfam" id="NF005932">
    <property type="entry name" value="PRK07956.1"/>
    <property type="match status" value="1"/>
</dbReference>
<dbReference type="PANTHER" id="PTHR23389">
    <property type="entry name" value="CHROMOSOME TRANSMISSION FIDELITY FACTOR 18"/>
    <property type="match status" value="1"/>
</dbReference>
<dbReference type="PANTHER" id="PTHR23389:SF9">
    <property type="entry name" value="DNA LIGASE"/>
    <property type="match status" value="1"/>
</dbReference>
<dbReference type="Pfam" id="PF00533">
    <property type="entry name" value="BRCT"/>
    <property type="match status" value="1"/>
</dbReference>
<dbReference type="Pfam" id="PF01653">
    <property type="entry name" value="DNA_ligase_aden"/>
    <property type="match status" value="1"/>
</dbReference>
<dbReference type="Pfam" id="PF03120">
    <property type="entry name" value="DNA_ligase_OB"/>
    <property type="match status" value="1"/>
</dbReference>
<dbReference type="Pfam" id="PF03119">
    <property type="entry name" value="DNA_ligase_ZBD"/>
    <property type="match status" value="1"/>
</dbReference>
<dbReference type="Pfam" id="PF12826">
    <property type="entry name" value="HHH_2"/>
    <property type="match status" value="1"/>
</dbReference>
<dbReference type="PIRSF" id="PIRSF001604">
    <property type="entry name" value="LigA"/>
    <property type="match status" value="1"/>
</dbReference>
<dbReference type="SMART" id="SM00292">
    <property type="entry name" value="BRCT"/>
    <property type="match status" value="1"/>
</dbReference>
<dbReference type="SMART" id="SM00532">
    <property type="entry name" value="LIGANc"/>
    <property type="match status" value="1"/>
</dbReference>
<dbReference type="SUPFAM" id="SSF52113">
    <property type="entry name" value="BRCT domain"/>
    <property type="match status" value="1"/>
</dbReference>
<dbReference type="SUPFAM" id="SSF56091">
    <property type="entry name" value="DNA ligase/mRNA capping enzyme, catalytic domain"/>
    <property type="match status" value="1"/>
</dbReference>
<dbReference type="SUPFAM" id="SSF50249">
    <property type="entry name" value="Nucleic acid-binding proteins"/>
    <property type="match status" value="1"/>
</dbReference>
<dbReference type="SUPFAM" id="SSF47781">
    <property type="entry name" value="RuvA domain 2-like"/>
    <property type="match status" value="1"/>
</dbReference>
<dbReference type="PROSITE" id="PS50172">
    <property type="entry name" value="BRCT"/>
    <property type="match status" value="1"/>
</dbReference>
<dbReference type="PROSITE" id="PS01055">
    <property type="entry name" value="DNA_LIGASE_N1"/>
    <property type="match status" value="1"/>
</dbReference>
<dbReference type="PROSITE" id="PS01056">
    <property type="entry name" value="DNA_LIGASE_N2"/>
    <property type="match status" value="1"/>
</dbReference>
<name>DNLJ_NEOSM</name>
<evidence type="ECO:0000255" key="1">
    <source>
        <dbReference type="HAMAP-Rule" id="MF_01588"/>
    </source>
</evidence>
<reference key="1">
    <citation type="journal article" date="2006" name="PLoS Genet.">
        <title>Comparative genomics of emerging human ehrlichiosis agents.</title>
        <authorList>
            <person name="Dunning Hotopp J.C."/>
            <person name="Lin M."/>
            <person name="Madupu R."/>
            <person name="Crabtree J."/>
            <person name="Angiuoli S.V."/>
            <person name="Eisen J.A."/>
            <person name="Seshadri R."/>
            <person name="Ren Q."/>
            <person name="Wu M."/>
            <person name="Utterback T.R."/>
            <person name="Smith S."/>
            <person name="Lewis M."/>
            <person name="Khouri H."/>
            <person name="Zhang C."/>
            <person name="Niu H."/>
            <person name="Lin Q."/>
            <person name="Ohashi N."/>
            <person name="Zhi N."/>
            <person name="Nelson W.C."/>
            <person name="Brinkac L.M."/>
            <person name="Dodson R.J."/>
            <person name="Rosovitz M.J."/>
            <person name="Sundaram J.P."/>
            <person name="Daugherty S.C."/>
            <person name="Davidsen T."/>
            <person name="Durkin A.S."/>
            <person name="Gwinn M.L."/>
            <person name="Haft D.H."/>
            <person name="Selengut J.D."/>
            <person name="Sullivan S.A."/>
            <person name="Zafar N."/>
            <person name="Zhou L."/>
            <person name="Benahmed F."/>
            <person name="Forberger H."/>
            <person name="Halpin R."/>
            <person name="Mulligan S."/>
            <person name="Robinson J."/>
            <person name="White O."/>
            <person name="Rikihisa Y."/>
            <person name="Tettelin H."/>
        </authorList>
    </citation>
    <scope>NUCLEOTIDE SEQUENCE [LARGE SCALE GENOMIC DNA]</scope>
    <source>
        <strain>ATCC VR-367 / Miyayama</strain>
    </source>
</reference>
<sequence length="670" mass="75576">MEAKKEIQELYEKLLRHNKKYYQDDSPEITDAEYDSIKDRYLKLLEANPSLGFPVVVGYPASEKFQKVKHLSPMLSLRNIFSEEELVEYIEKTKRFLNLKSALEFLCEPKIDGVSFSARYVNGKLVSCATRGDGKIGENIIDNMKVINGFPIEIMDVPDLLEVRGEVFLDHDTFQTLEGFSNPRNAAAGSLRQLNPEITNERNLQYFAYSASKIDGIEHQEDVLHFLSGRGFMTNPLRLASSKVPEIMSFYDSVYRRRSQIKYDIDGLVYKVNDLKLHARLGTLSDAPRWAIAHKFPSHRAKTILEKIKLSVGRTGIITPVAHLKPITIGGVVISRASLYNEDELERKDIREGDLVIVERAGDVIPKVLEVDISYRTNQERFIFPDKCPSCSSTLIRKNNEAATRCNNSKKCPEQVIQQIKHLVSAQAFDIDGIGTSHISFFIEKGFISEPADIFRLDKHRDEIKKYDGWGEKSVENILKNIKNSRKISLEKFIFSLGIKNIGEKTAYMLAQQFKSFANWFDKMSMLKDDTQTEDEIRNLDGMGSCICESLLDFFSDSDNCNMVKSLSNHVMITDHTVNIGGSLSGKKFVFTGTLLSITREEAKEIIKKAGGIVVNSISKQIDYVVAGEKAGSKLAKANELGIAIIEEKTLIEFTNGNNTPALKKETSSN</sequence>
<comment type="function">
    <text evidence="1">DNA ligase that catalyzes the formation of phosphodiester linkages between 5'-phosphoryl and 3'-hydroxyl groups in double-stranded DNA using NAD as a coenzyme and as the energy source for the reaction. It is essential for DNA replication and repair of damaged DNA.</text>
</comment>
<comment type="catalytic activity">
    <reaction evidence="1">
        <text>NAD(+) + (deoxyribonucleotide)n-3'-hydroxyl + 5'-phospho-(deoxyribonucleotide)m = (deoxyribonucleotide)n+m + AMP + beta-nicotinamide D-nucleotide.</text>
        <dbReference type="EC" id="6.5.1.2"/>
    </reaction>
</comment>
<comment type="cofactor">
    <cofactor evidence="1">
        <name>Mg(2+)</name>
        <dbReference type="ChEBI" id="CHEBI:18420"/>
    </cofactor>
    <cofactor evidence="1">
        <name>Mn(2+)</name>
        <dbReference type="ChEBI" id="CHEBI:29035"/>
    </cofactor>
</comment>
<comment type="similarity">
    <text evidence="1">Belongs to the NAD-dependent DNA ligase family. LigA subfamily.</text>
</comment>
<keyword id="KW-0227">DNA damage</keyword>
<keyword id="KW-0234">DNA repair</keyword>
<keyword id="KW-0235">DNA replication</keyword>
<keyword id="KW-0436">Ligase</keyword>
<keyword id="KW-0460">Magnesium</keyword>
<keyword id="KW-0464">Manganese</keyword>
<keyword id="KW-0479">Metal-binding</keyword>
<keyword id="KW-0520">NAD</keyword>
<keyword id="KW-0862">Zinc</keyword>
<feature type="chain" id="PRO_0000313334" description="DNA ligase">
    <location>
        <begin position="1"/>
        <end position="670"/>
    </location>
</feature>
<feature type="domain" description="BRCT" evidence="1">
    <location>
        <begin position="579"/>
        <end position="668"/>
    </location>
</feature>
<feature type="active site" description="N6-AMP-lysine intermediate" evidence="1">
    <location>
        <position position="110"/>
    </location>
</feature>
<feature type="binding site" evidence="1">
    <location>
        <begin position="31"/>
        <end position="35"/>
    </location>
    <ligand>
        <name>NAD(+)</name>
        <dbReference type="ChEBI" id="CHEBI:57540"/>
    </ligand>
</feature>
<feature type="binding site" evidence="1">
    <location>
        <begin position="76"/>
        <end position="77"/>
    </location>
    <ligand>
        <name>NAD(+)</name>
        <dbReference type="ChEBI" id="CHEBI:57540"/>
    </ligand>
</feature>
<feature type="binding site" evidence="1">
    <location>
        <position position="108"/>
    </location>
    <ligand>
        <name>NAD(+)</name>
        <dbReference type="ChEBI" id="CHEBI:57540"/>
    </ligand>
</feature>
<feature type="binding site" evidence="1">
    <location>
        <position position="131"/>
    </location>
    <ligand>
        <name>NAD(+)</name>
        <dbReference type="ChEBI" id="CHEBI:57540"/>
    </ligand>
</feature>
<feature type="binding site" evidence="1">
    <location>
        <position position="166"/>
    </location>
    <ligand>
        <name>NAD(+)</name>
        <dbReference type="ChEBI" id="CHEBI:57540"/>
    </ligand>
</feature>
<feature type="binding site" evidence="1">
    <location>
        <position position="271"/>
    </location>
    <ligand>
        <name>NAD(+)</name>
        <dbReference type="ChEBI" id="CHEBI:57540"/>
    </ligand>
</feature>
<feature type="binding site" evidence="1">
    <location>
        <position position="295"/>
    </location>
    <ligand>
        <name>NAD(+)</name>
        <dbReference type="ChEBI" id="CHEBI:57540"/>
    </ligand>
</feature>
<feature type="binding site" evidence="1">
    <location>
        <position position="388"/>
    </location>
    <ligand>
        <name>Zn(2+)</name>
        <dbReference type="ChEBI" id="CHEBI:29105"/>
    </ligand>
</feature>
<feature type="binding site" evidence="1">
    <location>
        <position position="391"/>
    </location>
    <ligand>
        <name>Zn(2+)</name>
        <dbReference type="ChEBI" id="CHEBI:29105"/>
    </ligand>
</feature>
<feature type="binding site" evidence="1">
    <location>
        <position position="406"/>
    </location>
    <ligand>
        <name>Zn(2+)</name>
        <dbReference type="ChEBI" id="CHEBI:29105"/>
    </ligand>
</feature>
<feature type="binding site" evidence="1">
    <location>
        <position position="412"/>
    </location>
    <ligand>
        <name>Zn(2+)</name>
        <dbReference type="ChEBI" id="CHEBI:29105"/>
    </ligand>
</feature>
<organism>
    <name type="scientific">Neorickettsia sennetsu (strain ATCC VR-367 / Miyayama)</name>
    <name type="common">Ehrlichia sennetsu</name>
    <dbReference type="NCBI Taxonomy" id="222891"/>
    <lineage>
        <taxon>Bacteria</taxon>
        <taxon>Pseudomonadati</taxon>
        <taxon>Pseudomonadota</taxon>
        <taxon>Alphaproteobacteria</taxon>
        <taxon>Rickettsiales</taxon>
        <taxon>Anaplasmataceae</taxon>
        <taxon>Neorickettsia</taxon>
    </lineage>
</organism>
<proteinExistence type="inferred from homology"/>
<protein>
    <recommendedName>
        <fullName evidence="1">DNA ligase</fullName>
        <ecNumber evidence="1">6.5.1.2</ecNumber>
    </recommendedName>
    <alternativeName>
        <fullName evidence="1">Polydeoxyribonucleotide synthase [NAD(+)]</fullName>
    </alternativeName>
</protein>